<keyword id="KW-0156">Chromatin regulator</keyword>
<keyword id="KW-0158">Chromosome</keyword>
<keyword id="KW-0479">Metal-binding</keyword>
<keyword id="KW-0489">Methyltransferase</keyword>
<keyword id="KW-0517">Myogenesis</keyword>
<keyword id="KW-0539">Nucleus</keyword>
<keyword id="KW-1185">Reference proteome</keyword>
<keyword id="KW-0678">Repressor</keyword>
<keyword id="KW-0949">S-adenosyl-L-methionine</keyword>
<keyword id="KW-0804">Transcription</keyword>
<keyword id="KW-0805">Transcription regulation</keyword>
<keyword id="KW-0808">Transferase</keyword>
<keyword id="KW-0862">Zinc</keyword>
<comment type="function">
    <text evidence="2 3">Histone methyltransferase that specifically methylates monomethylated 'Lys-20' (H4K20me1) and dimethylated 'Lys-20' (H4K20me2) of histone H4 to produce respectively dimethylated 'Lys-20' (H4K20me2) and trimethylated 'Lys-20' (H4K20me3) and thus regulates transcription and maintenance of genome integrity. In vitro also methylates unmodified 'Lys-20' (H4K20me0) of histone H4 and nucleosomes (By similarity). H4 'Lys-20' trimethylation represents a specific tag for epigenetic transcriptional repression. Mainly functions in pericentric heterochromatin regions, thereby playing a central role in the establishment of constitutive heterochromatin in these regions. KMT5B is targeted to histone H3 via its interaction with RB1 family proteins (RB1, RBL1 and RBL2) (By similarity). Plays a role in myogenesis by regulating the expression of target genes, such as EID3. Facilitates TP53BP1 foci formation upon DNA damage and proficient non-homologous end-joining (NHEJ)-directed DNA repair by catalyzing the di- and trimethylation of 'Lys-20' of histone H4 (By similarity). May play a role in class switch reconbination by catalyzing the di- and trimethylation of 'Lys-20' of histone H4 (By similarity).</text>
</comment>
<comment type="catalytic activity">
    <reaction evidence="3">
        <text>N(6)-methyl-L-lysyl(20)-[histone H4] + S-adenosyl-L-methionine = N(6),N(6)-dimethyl-L-lysyl(20)-[histone H4] + S-adenosyl-L-homocysteine + H(+)</text>
        <dbReference type="Rhea" id="RHEA:60348"/>
        <dbReference type="Rhea" id="RHEA-COMP:15555"/>
        <dbReference type="Rhea" id="RHEA-COMP:15556"/>
        <dbReference type="ChEBI" id="CHEBI:15378"/>
        <dbReference type="ChEBI" id="CHEBI:57856"/>
        <dbReference type="ChEBI" id="CHEBI:59789"/>
        <dbReference type="ChEBI" id="CHEBI:61929"/>
        <dbReference type="ChEBI" id="CHEBI:61976"/>
        <dbReference type="EC" id="2.1.1.362"/>
    </reaction>
    <physiologicalReaction direction="left-to-right" evidence="3">
        <dbReference type="Rhea" id="RHEA:60349"/>
    </physiologicalReaction>
</comment>
<comment type="catalytic activity">
    <reaction evidence="3">
        <text>N(6),N(6)-dimethyl-L-lysyl(20)-[histone H4] + S-adenosyl-L-methionine = N(6),N(6),N(6)-trimethyl-L-lysyl(20)-[histone H4] + S-adenosyl-L-homocysteine + H(+)</text>
        <dbReference type="Rhea" id="RHEA:61992"/>
        <dbReference type="Rhea" id="RHEA-COMP:15556"/>
        <dbReference type="Rhea" id="RHEA-COMP:15998"/>
        <dbReference type="ChEBI" id="CHEBI:15378"/>
        <dbReference type="ChEBI" id="CHEBI:57856"/>
        <dbReference type="ChEBI" id="CHEBI:59789"/>
        <dbReference type="ChEBI" id="CHEBI:61961"/>
        <dbReference type="ChEBI" id="CHEBI:61976"/>
    </reaction>
    <physiologicalReaction direction="left-to-right" evidence="3">
        <dbReference type="Rhea" id="RHEA:61993"/>
    </physiologicalReaction>
</comment>
<comment type="catalytic activity">
    <reaction evidence="3">
        <text>L-lysyl(20)-[histone H4] + S-adenosyl-L-methionine = N(6)-methyl-L-lysyl(20)-[histone H4] + S-adenosyl-L-homocysteine + H(+)</text>
        <dbReference type="Rhea" id="RHEA:60344"/>
        <dbReference type="Rhea" id="RHEA-COMP:15554"/>
        <dbReference type="Rhea" id="RHEA-COMP:15555"/>
        <dbReference type="ChEBI" id="CHEBI:15378"/>
        <dbReference type="ChEBI" id="CHEBI:29969"/>
        <dbReference type="ChEBI" id="CHEBI:57856"/>
        <dbReference type="ChEBI" id="CHEBI:59789"/>
        <dbReference type="ChEBI" id="CHEBI:61929"/>
        <dbReference type="EC" id="2.1.1.361"/>
    </reaction>
    <physiologicalReaction direction="left-to-right" evidence="3">
        <dbReference type="Rhea" id="RHEA:60345"/>
    </physiologicalReaction>
</comment>
<comment type="activity regulation">
    <text evidence="3">Inhibited by 6,7-Dichloro-N-cyclopentyl-4-(pyridin-4-yl)phthalazin-1-amine (A-196). A-196 is competitive with the histone peptide substrate H4K20me1 but non competitive with S-adenosyl-L-methionine.</text>
</comment>
<comment type="subunit">
    <text evidence="1 3">Homodimer (By similarity). Interacts with HP1 proteins CBX1, CBX3 and CBX5. Interacts with RB1 family proteins RB1, RBL1 and RBL2 (By similarity). Interacts (via C-terminus) with FRG1 (By similarity).</text>
</comment>
<comment type="subcellular location">
    <subcellularLocation>
        <location>Nucleus</location>
    </subcellularLocation>
    <subcellularLocation>
        <location evidence="1">Chromosome</location>
    </subcellularLocation>
    <text evidence="1">Associated with pericentric heterochromatin. CBX1 and CBX5 are required for the localization to pericentric heterochromatin (By similarity).</text>
</comment>
<comment type="similarity">
    <text evidence="5">Belongs to the class V-like SAM-binding methyltransferase superfamily. Histone-lysine methyltransferase family. Suvar4-20 subfamily.</text>
</comment>
<sequence length="393" mass="44552">MKWLGESKNMVVNGRRHGGKLSNDHQQNQSKLQHSGKDNVKAGRNAGERRSSRCNGNSGFEGQSRYVPSSGMSAKELCENDDLATSLVLDPYLGFQTHKMNTSAFPPRSSRHFSKSDSFSHNNPVRFRPIKGRQEELKEVIERFKKDEHLEKAFKCLTSGEWARHYFLNKNKMQEKLFKEHVFIYLRMFATDSGFEILPCNRYSSEQNGAKIVATKEWKRNDKIELLVGCIAELSEIEENMLLRHGENDFSVMYSTRKNCAQLWLGPAAFINHDCRPNCKFVSTGRDTACVKALRDIEPGEEISCYYGDGFFGENNEFCECYTCERRGTGAFKSRVGLPAPAPVINSKYGLRETDKRLNRLKKLGDSSKNSDSQSVSSNTDADTTQGRNDASK</sequence>
<proteinExistence type="evidence at transcript level"/>
<reference key="1">
    <citation type="submission" date="2006-02" db="EMBL/GenBank/DDBJ databases">
        <authorList>
            <consortium name="NIH - Mammalian Gene Collection (MGC) project"/>
        </authorList>
    </citation>
    <scope>NUCLEOTIDE SEQUENCE [LARGE SCALE MRNA]</scope>
    <source>
        <strain>Hereford</strain>
        <tissue>Heart ventricle</tissue>
    </source>
</reference>
<organism>
    <name type="scientific">Bos taurus</name>
    <name type="common">Bovine</name>
    <dbReference type="NCBI Taxonomy" id="9913"/>
    <lineage>
        <taxon>Eukaryota</taxon>
        <taxon>Metazoa</taxon>
        <taxon>Chordata</taxon>
        <taxon>Craniata</taxon>
        <taxon>Vertebrata</taxon>
        <taxon>Euteleostomi</taxon>
        <taxon>Mammalia</taxon>
        <taxon>Eutheria</taxon>
        <taxon>Laurasiatheria</taxon>
        <taxon>Artiodactyla</taxon>
        <taxon>Ruminantia</taxon>
        <taxon>Pecora</taxon>
        <taxon>Bovidae</taxon>
        <taxon>Bovinae</taxon>
        <taxon>Bos</taxon>
    </lineage>
</organism>
<name>KMT5B_BOVIN</name>
<protein>
    <recommendedName>
        <fullName evidence="7">Histone-lysine N-methyltransferase KMT5B</fullName>
    </recommendedName>
    <alternativeName>
        <fullName evidence="3">Lysine-specific methyltransferase 5B</fullName>
    </alternativeName>
    <alternativeName>
        <fullName>Suppressor of variegation 4-20 homolog 1</fullName>
        <shortName>Su(var)4-20 homolog 1</shortName>
        <shortName>Suv4-20h1</shortName>
    </alternativeName>
    <alternativeName>
        <fullName evidence="7">[histone H4]-N-methyl-L-lysine20 N-methyltransferase KMT5B</fullName>
        <ecNumber evidence="3">2.1.1.362</ecNumber>
    </alternativeName>
    <alternativeName>
        <fullName evidence="7">[histone H4]-lysine20 N-methyltransferase KMT5B</fullName>
        <ecNumber evidence="3">2.1.1.361</ecNumber>
    </alternativeName>
</protein>
<feature type="chain" id="PRO_0000281786" description="Histone-lysine N-methyltransferase KMT5B">
    <location>
        <begin position="1"/>
        <end position="393"/>
    </location>
</feature>
<feature type="domain" description="SET" evidence="4">
    <location>
        <begin position="193"/>
        <end position="308"/>
    </location>
</feature>
<feature type="region of interest" description="Disordered" evidence="6">
    <location>
        <begin position="13"/>
        <end position="66"/>
    </location>
</feature>
<feature type="region of interest" description="Disordered" evidence="6">
    <location>
        <begin position="103"/>
        <end position="126"/>
    </location>
</feature>
<feature type="region of interest" description="Disordered" evidence="6">
    <location>
        <begin position="360"/>
        <end position="393"/>
    </location>
</feature>
<feature type="compositionally biased region" description="Polar residues" evidence="6">
    <location>
        <begin position="24"/>
        <end position="33"/>
    </location>
</feature>
<feature type="compositionally biased region" description="Basic and acidic residues" evidence="6">
    <location>
        <begin position="35"/>
        <end position="51"/>
    </location>
</feature>
<feature type="compositionally biased region" description="Polar residues" evidence="6">
    <location>
        <begin position="53"/>
        <end position="66"/>
    </location>
</feature>
<feature type="compositionally biased region" description="Low complexity" evidence="6">
    <location>
        <begin position="367"/>
        <end position="378"/>
    </location>
</feature>
<feature type="compositionally biased region" description="Polar residues" evidence="6">
    <location>
        <begin position="379"/>
        <end position="393"/>
    </location>
</feature>
<feature type="binding site" evidence="3">
    <location>
        <position position="98"/>
    </location>
    <ligand>
        <name>S-adenosyl-L-methionine</name>
        <dbReference type="ChEBI" id="CHEBI:59789"/>
    </ligand>
</feature>
<feature type="binding site" evidence="3">
    <location>
        <begin position="203"/>
        <end position="206"/>
    </location>
    <ligand>
        <name>S-adenosyl-L-methionine</name>
        <dbReference type="ChEBI" id="CHEBI:59789"/>
    </ligand>
</feature>
<feature type="binding site" evidence="3">
    <location>
        <position position="210"/>
    </location>
    <ligand>
        <name>S-adenosyl-L-methionine</name>
        <dbReference type="ChEBI" id="CHEBI:59789"/>
    </ligand>
</feature>
<feature type="binding site" evidence="3">
    <location>
        <position position="257"/>
    </location>
    <ligand>
        <name>S-adenosyl-L-methionine</name>
        <dbReference type="ChEBI" id="CHEBI:59789"/>
    </ligand>
</feature>
<feature type="binding site" evidence="3">
    <location>
        <begin position="272"/>
        <end position="273"/>
    </location>
    <ligand>
        <name>S-adenosyl-L-methionine</name>
        <dbReference type="ChEBI" id="CHEBI:59789"/>
    </ligand>
</feature>
<feature type="binding site" evidence="3">
    <location>
        <position position="275"/>
    </location>
    <ligand>
        <name>Zn(2+)</name>
        <dbReference type="ChEBI" id="CHEBI:29105"/>
    </ligand>
</feature>
<feature type="binding site" evidence="3">
    <location>
        <position position="319"/>
    </location>
    <ligand>
        <name>Zn(2+)</name>
        <dbReference type="ChEBI" id="CHEBI:29105"/>
    </ligand>
</feature>
<feature type="binding site" evidence="3">
    <location>
        <position position="320"/>
    </location>
    <ligand>
        <name>S-adenosyl-L-methionine</name>
        <dbReference type="ChEBI" id="CHEBI:59789"/>
    </ligand>
</feature>
<feature type="binding site" evidence="3">
    <location>
        <position position="321"/>
    </location>
    <ligand>
        <name>Zn(2+)</name>
        <dbReference type="ChEBI" id="CHEBI:29105"/>
    </ligand>
</feature>
<feature type="binding site" evidence="3">
    <location>
        <position position="324"/>
    </location>
    <ligand>
        <name>Zn(2+)</name>
        <dbReference type="ChEBI" id="CHEBI:29105"/>
    </ligand>
</feature>
<gene>
    <name evidence="3" type="primary">KMT5B</name>
    <name type="synonym">SUV420H1</name>
</gene>
<accession>Q29RP8</accession>
<dbReference type="EC" id="2.1.1.362" evidence="3"/>
<dbReference type="EC" id="2.1.1.361" evidence="3"/>
<dbReference type="EMBL" id="BC114079">
    <property type="protein sequence ID" value="AAI14080.1"/>
    <property type="molecule type" value="mRNA"/>
</dbReference>
<dbReference type="RefSeq" id="NP_001070019.1">
    <property type="nucleotide sequence ID" value="NM_001076551.3"/>
</dbReference>
<dbReference type="SMR" id="Q29RP8"/>
<dbReference type="FunCoup" id="Q29RP8">
    <property type="interactions" value="44"/>
</dbReference>
<dbReference type="STRING" id="9913.ENSBTAP00000070473"/>
<dbReference type="PaxDb" id="9913-ENSBTAP00000051412"/>
<dbReference type="GeneID" id="767828"/>
<dbReference type="KEGG" id="bta:767828"/>
<dbReference type="CTD" id="51111"/>
<dbReference type="eggNOG" id="KOG2589">
    <property type="taxonomic scope" value="Eukaryota"/>
</dbReference>
<dbReference type="InParanoid" id="Q29RP8"/>
<dbReference type="OrthoDB" id="6627536at2759"/>
<dbReference type="Proteomes" id="UP000009136">
    <property type="component" value="Unplaced"/>
</dbReference>
<dbReference type="GO" id="GO:0005694">
    <property type="term" value="C:chromosome"/>
    <property type="evidence" value="ECO:0007669"/>
    <property type="project" value="UniProtKB-SubCell"/>
</dbReference>
<dbReference type="GO" id="GO:0005634">
    <property type="term" value="C:nucleus"/>
    <property type="evidence" value="ECO:0000318"/>
    <property type="project" value="GO_Central"/>
</dbReference>
<dbReference type="GO" id="GO:0003682">
    <property type="term" value="F:chromatin binding"/>
    <property type="evidence" value="ECO:0000250"/>
    <property type="project" value="UniProtKB"/>
</dbReference>
<dbReference type="GO" id="GO:0042799">
    <property type="term" value="F:histone H4K20 methyltransferase activity"/>
    <property type="evidence" value="ECO:0000250"/>
    <property type="project" value="UniProtKB"/>
</dbReference>
<dbReference type="GO" id="GO:0140944">
    <property type="term" value="F:histone H4K20 monomethyltransferase activity"/>
    <property type="evidence" value="ECO:0007669"/>
    <property type="project" value="UniProtKB-EC"/>
</dbReference>
<dbReference type="GO" id="GO:0140941">
    <property type="term" value="F:histone H4K20me methyltransferase activity"/>
    <property type="evidence" value="ECO:0007669"/>
    <property type="project" value="UniProtKB-EC"/>
</dbReference>
<dbReference type="GO" id="GO:0042054">
    <property type="term" value="F:histone methyltransferase activity"/>
    <property type="evidence" value="ECO:0000250"/>
    <property type="project" value="UniProtKB"/>
</dbReference>
<dbReference type="GO" id="GO:0046872">
    <property type="term" value="F:metal ion binding"/>
    <property type="evidence" value="ECO:0007669"/>
    <property type="project" value="UniProtKB-KW"/>
</dbReference>
<dbReference type="GO" id="GO:1904047">
    <property type="term" value="F:S-adenosyl-L-methionine binding"/>
    <property type="evidence" value="ECO:0000250"/>
    <property type="project" value="UniProtKB"/>
</dbReference>
<dbReference type="GO" id="GO:0006281">
    <property type="term" value="P:DNA repair"/>
    <property type="evidence" value="ECO:0000250"/>
    <property type="project" value="UniProtKB"/>
</dbReference>
<dbReference type="GO" id="GO:0032259">
    <property type="term" value="P:methylation"/>
    <property type="evidence" value="ECO:0007669"/>
    <property type="project" value="UniProtKB-KW"/>
</dbReference>
<dbReference type="GO" id="GO:0007517">
    <property type="term" value="P:muscle organ development"/>
    <property type="evidence" value="ECO:0007669"/>
    <property type="project" value="UniProtKB-KW"/>
</dbReference>
<dbReference type="GO" id="GO:2001034">
    <property type="term" value="P:positive regulation of double-strand break repair via nonhomologous end joining"/>
    <property type="evidence" value="ECO:0000250"/>
    <property type="project" value="UniProtKB"/>
</dbReference>
<dbReference type="GO" id="GO:0045830">
    <property type="term" value="P:positive regulation of isotype switching"/>
    <property type="evidence" value="ECO:0000250"/>
    <property type="project" value="UniProtKB"/>
</dbReference>
<dbReference type="CDD" id="cd19184">
    <property type="entry name" value="SET_KMT5B"/>
    <property type="match status" value="1"/>
</dbReference>
<dbReference type="FunFam" id="1.10.10.1700:FF:000001">
    <property type="entry name" value="Histone-lysine N-methyltransferase"/>
    <property type="match status" value="1"/>
</dbReference>
<dbReference type="FunFam" id="2.170.270.10:FF:000006">
    <property type="entry name" value="Histone-lysine N-methyltransferase"/>
    <property type="match status" value="1"/>
</dbReference>
<dbReference type="Gene3D" id="1.10.10.1700">
    <property type="entry name" value="Histone-lysine N-methyltransferase"/>
    <property type="match status" value="1"/>
</dbReference>
<dbReference type="Gene3D" id="2.170.270.10">
    <property type="entry name" value="SET domain"/>
    <property type="match status" value="1"/>
</dbReference>
<dbReference type="InterPro" id="IPR041938">
    <property type="entry name" value="Hist-Lys_N-MTase_N"/>
</dbReference>
<dbReference type="InterPro" id="IPR044424">
    <property type="entry name" value="KMT5B_SET"/>
</dbReference>
<dbReference type="InterPro" id="IPR001214">
    <property type="entry name" value="SET_dom"/>
</dbReference>
<dbReference type="InterPro" id="IPR046341">
    <property type="entry name" value="SET_dom_sf"/>
</dbReference>
<dbReference type="InterPro" id="IPR039977">
    <property type="entry name" value="Suv4-20/Set9"/>
</dbReference>
<dbReference type="InterPro" id="IPR025790">
    <property type="entry name" value="Suv4-20_animal"/>
</dbReference>
<dbReference type="PANTHER" id="PTHR12977:SF12">
    <property type="entry name" value="HISTONE-LYSINE N-METHYLTRANSFERASE KMT5B"/>
    <property type="match status" value="1"/>
</dbReference>
<dbReference type="PANTHER" id="PTHR12977">
    <property type="entry name" value="SUPPRESSOR OF VARIEGATION 4-20-RELATED"/>
    <property type="match status" value="1"/>
</dbReference>
<dbReference type="Pfam" id="PF00856">
    <property type="entry name" value="SET"/>
    <property type="match status" value="1"/>
</dbReference>
<dbReference type="SMART" id="SM00317">
    <property type="entry name" value="SET"/>
    <property type="match status" value="1"/>
</dbReference>
<dbReference type="SUPFAM" id="SSF82199">
    <property type="entry name" value="SET domain"/>
    <property type="match status" value="1"/>
</dbReference>
<dbReference type="PROSITE" id="PS51570">
    <property type="entry name" value="SAM_MT43_SUVAR420_2"/>
    <property type="match status" value="1"/>
</dbReference>
<dbReference type="PROSITE" id="PS50280">
    <property type="entry name" value="SET"/>
    <property type="match status" value="1"/>
</dbReference>
<evidence type="ECO:0000250" key="1"/>
<evidence type="ECO:0000250" key="2">
    <source>
        <dbReference type="UniProtKB" id="Q3U8K7"/>
    </source>
</evidence>
<evidence type="ECO:0000250" key="3">
    <source>
        <dbReference type="UniProtKB" id="Q4FZB7"/>
    </source>
</evidence>
<evidence type="ECO:0000255" key="4">
    <source>
        <dbReference type="PROSITE-ProRule" id="PRU00190"/>
    </source>
</evidence>
<evidence type="ECO:0000255" key="5">
    <source>
        <dbReference type="PROSITE-ProRule" id="PRU00903"/>
    </source>
</evidence>
<evidence type="ECO:0000256" key="6">
    <source>
        <dbReference type="SAM" id="MobiDB-lite"/>
    </source>
</evidence>
<evidence type="ECO:0000305" key="7"/>